<comment type="subcellular location">
    <subcellularLocation>
        <location evidence="2">Host membrane</location>
        <topology evidence="2">Single-pass membrane protein</topology>
    </subcellularLocation>
</comment>
<comment type="similarity">
    <text evidence="2">Belongs to the IIV-6 010R family.</text>
</comment>
<evidence type="ECO:0000255" key="1"/>
<evidence type="ECO:0000305" key="2"/>
<gene>
    <name type="ORF">IIV3-043R</name>
</gene>
<reference key="1">
    <citation type="journal article" date="2006" name="J. Virol.">
        <title>Genome of invertebrate iridescent virus type 3 (mosquito iridescent virus).</title>
        <authorList>
            <person name="Delhon G."/>
            <person name="Tulman E.R."/>
            <person name="Afonso C.L."/>
            <person name="Lu Z."/>
            <person name="Becnel J.J."/>
            <person name="Moser B.A."/>
            <person name="Kutish G.F."/>
            <person name="Rock D.L."/>
        </authorList>
    </citation>
    <scope>NUCLEOTIDE SEQUENCE [LARGE SCALE GENOMIC DNA]</scope>
</reference>
<accession>Q197B7</accession>
<organismHost>
    <name type="scientific">Aedes vexans</name>
    <name type="common">Inland floodwater mosquito</name>
    <name type="synonym">Culex vexans</name>
    <dbReference type="NCBI Taxonomy" id="7163"/>
</organismHost>
<organismHost>
    <name type="scientific">Culex territans</name>
    <dbReference type="NCBI Taxonomy" id="42431"/>
</organismHost>
<organismHost>
    <name type="scientific">Culiseta annulata</name>
    <dbReference type="NCBI Taxonomy" id="332058"/>
</organismHost>
<organismHost>
    <name type="scientific">Ochlerotatus sollicitans</name>
    <name type="common">eastern saltmarsh mosquito</name>
    <dbReference type="NCBI Taxonomy" id="310513"/>
</organismHost>
<organismHost>
    <name type="scientific">Ochlerotatus taeniorhynchus</name>
    <name type="common">Black salt marsh mosquito</name>
    <name type="synonym">Aedes taeniorhynchus</name>
    <dbReference type="NCBI Taxonomy" id="329105"/>
</organismHost>
<organismHost>
    <name type="scientific">Psorophora ferox</name>
    <dbReference type="NCBI Taxonomy" id="7183"/>
</organismHost>
<dbReference type="EMBL" id="DQ643392">
    <property type="protein sequence ID" value="ABF82073.1"/>
    <property type="molecule type" value="Genomic_DNA"/>
</dbReference>
<dbReference type="RefSeq" id="YP_654615.1">
    <property type="nucleotide sequence ID" value="NC_008187.1"/>
</dbReference>
<dbReference type="KEGG" id="vg:4156353"/>
<dbReference type="OrthoDB" id="38576at10239"/>
<dbReference type="Proteomes" id="UP000001358">
    <property type="component" value="Genome"/>
</dbReference>
<dbReference type="GO" id="GO:0033644">
    <property type="term" value="C:host cell membrane"/>
    <property type="evidence" value="ECO:0007669"/>
    <property type="project" value="UniProtKB-SubCell"/>
</dbReference>
<dbReference type="GO" id="GO:0016020">
    <property type="term" value="C:membrane"/>
    <property type="evidence" value="ECO:0007669"/>
    <property type="project" value="UniProtKB-KW"/>
</dbReference>
<proteinExistence type="inferred from homology"/>
<name>VF010_IIV3</name>
<organism>
    <name type="scientific">Invertebrate iridescent virus 3</name>
    <name type="common">IIV-3</name>
    <name type="synonym">Mosquito iridescent virus</name>
    <dbReference type="NCBI Taxonomy" id="345201"/>
    <lineage>
        <taxon>Viruses</taxon>
        <taxon>Varidnaviria</taxon>
        <taxon>Bamfordvirae</taxon>
        <taxon>Nucleocytoviricota</taxon>
        <taxon>Megaviricetes</taxon>
        <taxon>Pimascovirales</taxon>
        <taxon>Iridoviridae</taxon>
        <taxon>Betairidovirinae</taxon>
        <taxon>Chloriridovirus</taxon>
    </lineage>
</organism>
<sequence>MVVKENFCGACLTIPLAFAGAGTAIGAEKAATIKKWSIVITIISLLLTVWFIYVKKCSTCKLRP</sequence>
<protein>
    <recommendedName>
        <fullName>Uncharacterized protein 043R</fullName>
    </recommendedName>
</protein>
<keyword id="KW-1043">Host membrane</keyword>
<keyword id="KW-0472">Membrane</keyword>
<keyword id="KW-1185">Reference proteome</keyword>
<keyword id="KW-0732">Signal</keyword>
<keyword id="KW-0812">Transmembrane</keyword>
<keyword id="KW-1133">Transmembrane helix</keyword>
<feature type="signal peptide" evidence="1">
    <location>
        <begin position="1"/>
        <end position="26"/>
    </location>
</feature>
<feature type="chain" id="PRO_0000377919" description="Uncharacterized protein 043R">
    <location>
        <begin position="27"/>
        <end position="64"/>
    </location>
</feature>
<feature type="transmembrane region" description="Helical" evidence="1">
    <location>
        <begin position="33"/>
        <end position="53"/>
    </location>
</feature>